<keyword id="KW-0002">3D-structure</keyword>
<keyword id="KW-0007">Acetylation</keyword>
<keyword id="KW-0963">Cytoplasm</keyword>
<keyword id="KW-0903">Direct protein sequencing</keyword>
<keyword id="KW-0378">Hydrolase</keyword>
<keyword id="KW-0442">Lipid degradation</keyword>
<keyword id="KW-0443">Lipid metabolism</keyword>
<keyword id="KW-0597">Phosphoprotein</keyword>
<keyword id="KW-1185">Reference proteome</keyword>
<organism>
    <name type="scientific">Bos taurus</name>
    <name type="common">Bovine</name>
    <dbReference type="NCBI Taxonomy" id="9913"/>
    <lineage>
        <taxon>Eukaryota</taxon>
        <taxon>Metazoa</taxon>
        <taxon>Chordata</taxon>
        <taxon>Craniata</taxon>
        <taxon>Vertebrata</taxon>
        <taxon>Euteleostomi</taxon>
        <taxon>Mammalia</taxon>
        <taxon>Eutheria</taxon>
        <taxon>Laurasiatheria</taxon>
        <taxon>Artiodactyla</taxon>
        <taxon>Ruminantia</taxon>
        <taxon>Pecora</taxon>
        <taxon>Bovidae</taxon>
        <taxon>Bovinae</taxon>
        <taxon>Bos</taxon>
    </lineage>
</organism>
<sequence length="232" mass="25865">MSGDENPASKPTPVQDVQGDGRWMSLHHRFVADSKDKEPEVVFIGDSLVQLMHQCEIWRELFSPLHALNFGIGGDSTQHVLWRLENGELEHIRPKIVVVWVGTNNHGHTAEQVTGGIKAIVQLVNERQPQARVVVLGLLPRGQHPNPLREKNRRVNELVRAALAGHPRAHFLDADPGFVHSDGTISHHDMYDYLHLSRLGYTPVCRALHSLLLRLLTQDQGQGGAPLPEPSP</sequence>
<feature type="initiator methionine" description="Removed" evidence="3">
    <location>
        <position position="1"/>
    </location>
</feature>
<feature type="chain" id="PRO_0000058154" description="Platelet-activating factor acetylhydrolase IB subunit alpha1">
    <location>
        <begin position="2"/>
        <end position="232"/>
    </location>
</feature>
<feature type="active site" evidence="6 9">
    <location>
        <position position="47"/>
    </location>
</feature>
<feature type="active site" evidence="6 9">
    <location>
        <position position="192"/>
    </location>
</feature>
<feature type="active site" evidence="6 9">
    <location>
        <position position="195"/>
    </location>
</feature>
<feature type="modified residue" description="N-acetylserine" evidence="3">
    <location>
        <position position="2"/>
    </location>
</feature>
<feature type="modified residue" description="Phosphoserine" evidence="3">
    <location>
        <position position="2"/>
    </location>
</feature>
<feature type="sequence conflict" description="In Ref. 1; AA sequence." evidence="7" ref="1">
    <location>
        <position position="79"/>
    </location>
</feature>
<feature type="sequence conflict" description="In Ref. 1; AA sequence." evidence="7" ref="1">
    <original>E</original>
    <variation>L</variation>
    <location>
        <position position="150"/>
    </location>
</feature>
<feature type="helix" evidence="10">
    <location>
        <begin position="7"/>
        <end position="9"/>
    </location>
</feature>
<feature type="strand" evidence="10">
    <location>
        <begin position="17"/>
        <end position="20"/>
    </location>
</feature>
<feature type="helix" evidence="10">
    <location>
        <begin position="22"/>
        <end position="36"/>
    </location>
</feature>
<feature type="strand" evidence="10">
    <location>
        <begin position="40"/>
        <end position="46"/>
    </location>
</feature>
<feature type="helix" evidence="10">
    <location>
        <begin position="47"/>
        <end position="50"/>
    </location>
</feature>
<feature type="helix" evidence="10">
    <location>
        <begin position="52"/>
        <end position="55"/>
    </location>
</feature>
<feature type="helix" evidence="10">
    <location>
        <begin position="58"/>
        <end position="61"/>
    </location>
</feature>
<feature type="helix" evidence="10">
    <location>
        <begin position="63"/>
        <end position="65"/>
    </location>
</feature>
<feature type="strand" evidence="10">
    <location>
        <begin position="67"/>
        <end position="71"/>
    </location>
</feature>
<feature type="helix" evidence="10">
    <location>
        <begin position="77"/>
        <end position="85"/>
    </location>
</feature>
<feature type="turn" evidence="10">
    <location>
        <begin position="86"/>
        <end position="91"/>
    </location>
</feature>
<feature type="strand" evidence="10">
    <location>
        <begin position="95"/>
        <end position="100"/>
    </location>
</feature>
<feature type="helix" evidence="10">
    <location>
        <begin position="110"/>
        <end position="127"/>
    </location>
</feature>
<feature type="strand" evidence="10">
    <location>
        <begin position="132"/>
        <end position="136"/>
    </location>
</feature>
<feature type="strand" evidence="10">
    <location>
        <begin position="142"/>
        <end position="144"/>
    </location>
</feature>
<feature type="helix" evidence="10">
    <location>
        <begin position="147"/>
        <end position="164"/>
    </location>
</feature>
<feature type="strand" evidence="10">
    <location>
        <begin position="169"/>
        <end position="172"/>
    </location>
</feature>
<feature type="turn" evidence="10">
    <location>
        <begin position="187"/>
        <end position="189"/>
    </location>
</feature>
<feature type="strand" evidence="10">
    <location>
        <begin position="193"/>
        <end position="196"/>
    </location>
</feature>
<feature type="helix" evidence="10">
    <location>
        <begin position="198"/>
        <end position="215"/>
    </location>
</feature>
<gene>
    <name evidence="3" type="primary">PAFAH1B3</name>
    <name type="synonym">PAFAHG</name>
</gene>
<name>PA1B3_BOVIN</name>
<proteinExistence type="evidence at protein level"/>
<evidence type="ECO:0000250" key="1">
    <source>
        <dbReference type="UniProtKB" id="P43034"/>
    </source>
</evidence>
<evidence type="ECO:0000250" key="2">
    <source>
        <dbReference type="UniProtKB" id="P68402"/>
    </source>
</evidence>
<evidence type="ECO:0000250" key="3">
    <source>
        <dbReference type="UniProtKB" id="Q15102"/>
    </source>
</evidence>
<evidence type="ECO:0000250" key="4">
    <source>
        <dbReference type="UniProtKB" id="Q61205"/>
    </source>
</evidence>
<evidence type="ECO:0000269" key="5">
    <source>
    </source>
</evidence>
<evidence type="ECO:0000269" key="6">
    <source>
    </source>
</evidence>
<evidence type="ECO:0000305" key="7"/>
<evidence type="ECO:0000305" key="8">
    <source>
    </source>
</evidence>
<evidence type="ECO:0007744" key="9">
    <source>
        <dbReference type="PDB" id="1BWP"/>
    </source>
</evidence>
<evidence type="ECO:0007829" key="10">
    <source>
        <dbReference type="PDB" id="1ES9"/>
    </source>
</evidence>
<dbReference type="EC" id="3.1.1.47" evidence="5"/>
<dbReference type="EMBL" id="D30789">
    <property type="protein sequence ID" value="BAA06455.1"/>
    <property type="molecule type" value="mRNA"/>
</dbReference>
<dbReference type="EMBL" id="BC120202">
    <property type="protein sequence ID" value="AAI20203.1"/>
    <property type="molecule type" value="mRNA"/>
</dbReference>
<dbReference type="PIR" id="A54754">
    <property type="entry name" value="A54754"/>
</dbReference>
<dbReference type="RefSeq" id="NP_777090.1">
    <property type="nucleotide sequence ID" value="NM_174665.2"/>
</dbReference>
<dbReference type="PDB" id="1BWP">
    <property type="method" value="X-ray"/>
    <property type="resolution" value="2.10 A"/>
    <property type="chains" value="A=1-232"/>
</dbReference>
<dbReference type="PDB" id="1BWQ">
    <property type="method" value="X-ray"/>
    <property type="resolution" value="2.30 A"/>
    <property type="chains" value="A=1-232"/>
</dbReference>
<dbReference type="PDB" id="1BWR">
    <property type="method" value="X-ray"/>
    <property type="resolution" value="2.40 A"/>
    <property type="chains" value="A=1-232"/>
</dbReference>
<dbReference type="PDB" id="1ES9">
    <property type="method" value="X-ray"/>
    <property type="resolution" value="1.30 A"/>
    <property type="chains" value="A=1-232"/>
</dbReference>
<dbReference type="PDB" id="1FXW">
    <property type="method" value="X-ray"/>
    <property type="resolution" value="2.10 A"/>
    <property type="chains" value="A=1-232"/>
</dbReference>
<dbReference type="PDB" id="1WAB">
    <property type="method" value="X-ray"/>
    <property type="resolution" value="1.70 A"/>
    <property type="chains" value="A=1-232"/>
</dbReference>
<dbReference type="PDB" id="3DT6">
    <property type="method" value="X-ray"/>
    <property type="resolution" value="2.10 A"/>
    <property type="chains" value="A=1-232"/>
</dbReference>
<dbReference type="PDB" id="3DT8">
    <property type="method" value="X-ray"/>
    <property type="resolution" value="1.85 A"/>
    <property type="chains" value="A=1-232"/>
</dbReference>
<dbReference type="PDB" id="3DT9">
    <property type="method" value="X-ray"/>
    <property type="resolution" value="1.85 A"/>
    <property type="chains" value="A=1-232"/>
</dbReference>
<dbReference type="PDBsum" id="1BWP"/>
<dbReference type="PDBsum" id="1BWQ"/>
<dbReference type="PDBsum" id="1BWR"/>
<dbReference type="PDBsum" id="1ES9"/>
<dbReference type="PDBsum" id="1FXW"/>
<dbReference type="PDBsum" id="1WAB"/>
<dbReference type="PDBsum" id="3DT6"/>
<dbReference type="PDBsum" id="3DT8"/>
<dbReference type="PDBsum" id="3DT9"/>
<dbReference type="SMR" id="Q29460"/>
<dbReference type="CORUM" id="Q29460"/>
<dbReference type="FunCoup" id="Q29460">
    <property type="interactions" value="1496"/>
</dbReference>
<dbReference type="IntAct" id="Q29460">
    <property type="interactions" value="1"/>
</dbReference>
<dbReference type="MINT" id="Q29460"/>
<dbReference type="STRING" id="9913.ENSBTAP00000066532"/>
<dbReference type="SwissLipids" id="SLP:000000693"/>
<dbReference type="iPTMnet" id="Q29460"/>
<dbReference type="PaxDb" id="9913-ENSBTAP00000026366"/>
<dbReference type="PeptideAtlas" id="Q29460"/>
<dbReference type="GeneID" id="282515"/>
<dbReference type="KEGG" id="bta:282515"/>
<dbReference type="CTD" id="5050"/>
<dbReference type="VEuPathDB" id="HostDB:ENSBTAG00000019787"/>
<dbReference type="eggNOG" id="KOG1388">
    <property type="taxonomic scope" value="Eukaryota"/>
</dbReference>
<dbReference type="HOGENOM" id="CLU_051989_2_0_1"/>
<dbReference type="InParanoid" id="Q29460"/>
<dbReference type="OMA" id="QTQNVLW"/>
<dbReference type="OrthoDB" id="505607at2759"/>
<dbReference type="TreeFam" id="TF323955"/>
<dbReference type="BRENDA" id="3.1.1.47">
    <property type="organism ID" value="908"/>
</dbReference>
<dbReference type="Reactome" id="R-BTA-6811436">
    <property type="pathway name" value="COPI-independent Golgi-to-ER retrograde traffic"/>
</dbReference>
<dbReference type="EvolutionaryTrace" id="Q29460"/>
<dbReference type="Proteomes" id="UP000009136">
    <property type="component" value="Chromosome 18"/>
</dbReference>
<dbReference type="Bgee" id="ENSBTAG00000019787">
    <property type="expression patterns" value="Expressed in pons and 106 other cell types or tissues"/>
</dbReference>
<dbReference type="GO" id="GO:0008247">
    <property type="term" value="C:1-alkyl-2-acetylglycerophosphocholine esterase complex"/>
    <property type="evidence" value="ECO:0000314"/>
    <property type="project" value="UniProtKB"/>
</dbReference>
<dbReference type="GO" id="GO:0005737">
    <property type="term" value="C:cytoplasm"/>
    <property type="evidence" value="ECO:0000250"/>
    <property type="project" value="AgBase"/>
</dbReference>
<dbReference type="GO" id="GO:0003847">
    <property type="term" value="F:1-alkyl-2-acetylglycerophosphocholine esterase activity"/>
    <property type="evidence" value="ECO:0000314"/>
    <property type="project" value="UniProtKB"/>
</dbReference>
<dbReference type="GO" id="GO:0047179">
    <property type="term" value="F:platelet-activating factor acetyltransferase activity"/>
    <property type="evidence" value="ECO:0000318"/>
    <property type="project" value="GO_Central"/>
</dbReference>
<dbReference type="GO" id="GO:0046982">
    <property type="term" value="F:protein heterodimerization activity"/>
    <property type="evidence" value="ECO:0000250"/>
    <property type="project" value="UniProtKB"/>
</dbReference>
<dbReference type="GO" id="GO:0042803">
    <property type="term" value="F:protein homodimerization activity"/>
    <property type="evidence" value="ECO:0000250"/>
    <property type="project" value="UniProtKB"/>
</dbReference>
<dbReference type="GO" id="GO:0016042">
    <property type="term" value="P:lipid catabolic process"/>
    <property type="evidence" value="ECO:0007669"/>
    <property type="project" value="UniProtKB-KW"/>
</dbReference>
<dbReference type="GO" id="GO:0007283">
    <property type="term" value="P:spermatogenesis"/>
    <property type="evidence" value="ECO:0000250"/>
    <property type="project" value="AgBase"/>
</dbReference>
<dbReference type="CDD" id="cd01820">
    <property type="entry name" value="PAF_acetylesterase_like"/>
    <property type="match status" value="1"/>
</dbReference>
<dbReference type="FunFam" id="3.40.50.1110:FF:000004">
    <property type="entry name" value="Platelet-activating factor acetylhydrolase IB subunit beta"/>
    <property type="match status" value="1"/>
</dbReference>
<dbReference type="Gene3D" id="3.40.50.1110">
    <property type="entry name" value="SGNH hydrolase"/>
    <property type="match status" value="1"/>
</dbReference>
<dbReference type="InterPro" id="IPR013830">
    <property type="entry name" value="SGNH_hydro"/>
</dbReference>
<dbReference type="InterPro" id="IPR036514">
    <property type="entry name" value="SGNH_hydro_sf"/>
</dbReference>
<dbReference type="PANTHER" id="PTHR11852">
    <property type="entry name" value="PLATELET-ACTIVATING FACTOR ACETYLHYDROLASE"/>
    <property type="match status" value="1"/>
</dbReference>
<dbReference type="PANTHER" id="PTHR11852:SF2">
    <property type="entry name" value="PLATELET-ACTIVATING FACTOR ACETYLHYDROLASE IB SUBUNIT ALPHA1"/>
    <property type="match status" value="1"/>
</dbReference>
<dbReference type="Pfam" id="PF13472">
    <property type="entry name" value="Lipase_GDSL_2"/>
    <property type="match status" value="1"/>
</dbReference>
<dbReference type="SUPFAM" id="SSF52266">
    <property type="entry name" value="SGNH hydrolase"/>
    <property type="match status" value="1"/>
</dbReference>
<comment type="function">
    <text evidence="5">Alpha1 catalytic subunit of the cytosolic type I platelet-activating factor (PAF) acetylhydrolase (PAF-AH (I)) heterotetrameric enzyme that catalyzes the hydrolyze of the acetyl group at the sn-2 position of PAF and its analogs and modulates the action of PAF (PubMed:10542206). The activity and substrate specificity of PAF-AH (I) are affected by its subunit composition (PubMed:10542206). Both alpha1/alpha1 homodimer (PAFAH1B3/PAFAH1B3 homodimer) and alpha1/alpha2 heterodimer(PAFAH1B3/PAFAH1B2 heterodimer) hydrolyze 1-O-alkyl-2-acetyl-sn-glycero-3-phosphoric acid (AAGPA) more efficiently than PAF, but they have little hydrolytic activity towards 1-O-alkyl-2-acetyl-sn-glycero-3-phosphorylethanolamine (AAGPE) (PubMed:10542206). Plays an important role during the development of brain.</text>
</comment>
<comment type="catalytic activity">
    <reaction evidence="5">
        <text>a 1-O-alkyl-2-acetyl-sn-glycero-3-phosphocholine + H2O = a 1-O-alkyl-sn-glycero-3-phosphocholine + acetate + H(+)</text>
        <dbReference type="Rhea" id="RHEA:17777"/>
        <dbReference type="ChEBI" id="CHEBI:15377"/>
        <dbReference type="ChEBI" id="CHEBI:15378"/>
        <dbReference type="ChEBI" id="CHEBI:30089"/>
        <dbReference type="ChEBI" id="CHEBI:30909"/>
        <dbReference type="ChEBI" id="CHEBI:36707"/>
        <dbReference type="EC" id="3.1.1.47"/>
    </reaction>
    <physiologicalReaction direction="left-to-right" evidence="8">
        <dbReference type="Rhea" id="RHEA:17778"/>
    </physiologicalReaction>
</comment>
<comment type="catalytic activity">
    <reaction evidence="5">
        <text>1-O-hexadecyl-2-acetyl-sn-glycero-3-phosphocholine + H2O = 1-O-hexadecyl-sn-glycero-3-phosphocholine + acetate + H(+)</text>
        <dbReference type="Rhea" id="RHEA:40479"/>
        <dbReference type="ChEBI" id="CHEBI:15377"/>
        <dbReference type="ChEBI" id="CHEBI:15378"/>
        <dbReference type="ChEBI" id="CHEBI:30089"/>
        <dbReference type="ChEBI" id="CHEBI:44811"/>
        <dbReference type="ChEBI" id="CHEBI:64496"/>
    </reaction>
    <physiologicalReaction direction="left-to-right" evidence="8">
        <dbReference type="Rhea" id="RHEA:40480"/>
    </physiologicalReaction>
</comment>
<comment type="catalytic activity">
    <reaction evidence="5">
        <text>1-O-hexadecyl-2-acetyl-sn-glycero-3-phosphate + H2O = 1-O-hexadecyl-sn-glycero-3-phosphate + acetate + H(+)</text>
        <dbReference type="Rhea" id="RHEA:41704"/>
        <dbReference type="ChEBI" id="CHEBI:15377"/>
        <dbReference type="ChEBI" id="CHEBI:15378"/>
        <dbReference type="ChEBI" id="CHEBI:30089"/>
        <dbReference type="ChEBI" id="CHEBI:77580"/>
        <dbReference type="ChEBI" id="CHEBI:78385"/>
    </reaction>
    <physiologicalReaction direction="left-to-right" evidence="8">
        <dbReference type="Rhea" id="RHEA:41705"/>
    </physiologicalReaction>
</comment>
<comment type="activity regulation">
    <text evidence="5">Beta subunit (PAFAH1B1) inhibits the acetylhydrolase activity of the alpha1/alpha1 catalytic homodimer.</text>
</comment>
<comment type="subunit">
    <text evidence="4 5">Forms a catalytic dimer which is either homodimer (alpha1/alpha1 homodimer) or heterodimer with PAFAH1B2 (alpha1/alpha2 heterodimer) (PubMed:10542206). Component of the cytosolic (PAF-AH (I)) heterotetrameric enzyme, which is composed of PAFAH1B1 (beta), PAFAH1B2 (alpha2) and PAFAH1B3 (alpha1) subunits (PubMed:10542206). The catalytic activity of the enzyme resides in the alpha1 (PAFAH1B3) and alpha2 (PAFAH1B2) subunits, whereas the beta subunit (PAFAH1B1) has regulatory activity (PubMed:10542206). Trimer formation is not essential for the catalytic activity (PubMed:10542206). Interacts with VLDLR; this interaction may modulate the Reelin pathway (By similarity).</text>
</comment>
<comment type="subcellular location">
    <subcellularLocation>
        <location>Cytoplasm</location>
    </subcellularLocation>
</comment>
<comment type="miscellaneous">
    <text evidence="1 2 3 6">Originally the subunits of the type I platelet-activating factor (PAF) acetylhydrolase was named alpha (PAFAH1B1), beta (PAFAH1B2) and gamma (PAFAH1B3) (By similarity). Now these subunits have been renamed beta (PAFAH1B1), alpha2 (PAFAH1B2) and alpha1 (PAFAH1B3) respectively (PubMed:8985254).</text>
</comment>
<comment type="similarity">
    <text evidence="7">Belongs to the 'GDSL' lipolytic enzyme family. Platelet-activating factor acetylhydrolase IB beta/gamma subunits subfamily.</text>
</comment>
<accession>Q29460</accession>
<accession>Q0VCF0</accession>
<protein>
    <recommendedName>
        <fullName evidence="7">Platelet-activating factor acetylhydrolase IB subunit alpha1</fullName>
        <ecNumber evidence="5">3.1.1.47</ecNumber>
    </recommendedName>
    <alternativeName>
        <fullName>PAF acetylhydrolase 29 kDa subunit</fullName>
        <shortName>PAF-AH 29 kDa subunit</shortName>
    </alternativeName>
    <alternativeName>
        <fullName>PAF-AH subunit gamma</fullName>
        <shortName>PAFAH subunit gamma</shortName>
    </alternativeName>
</protein>
<reference key="1">
    <citation type="journal article" date="1994" name="J. Biol. Chem.">
        <title>The catalytic subunit of bovine brain platelet-activating factor acetylhydrolase is a novel type of serine esterase.</title>
        <authorList>
            <person name="Hattori M."/>
            <person name="Adachi H."/>
            <person name="Tsujimoto M."/>
            <person name="Arai H."/>
            <person name="Inoue K."/>
        </authorList>
    </citation>
    <scope>NUCLEOTIDE SEQUENCE [MRNA]</scope>
    <scope>PROTEIN SEQUENCE OF 38-85; 96-111 AND 119-151</scope>
    <source>
        <tissue>Brain</tissue>
    </source>
</reference>
<reference key="2">
    <citation type="submission" date="2006-08" db="EMBL/GenBank/DDBJ databases">
        <authorList>
            <consortium name="NIH - Mammalian Gene Collection (MGC) project"/>
        </authorList>
    </citation>
    <scope>NUCLEOTIDE SEQUENCE [LARGE SCALE MRNA]</scope>
    <source>
        <strain>Hereford</strain>
        <tissue>Fetal brain</tissue>
    </source>
</reference>
<reference key="3">
    <citation type="journal article" date="1999" name="J. Biol. Chem.">
        <title>Biochemical characterization of various catalytic complexes of the brain platelet-activating factor acetylhydrolase.</title>
        <authorList>
            <person name="Manya H."/>
            <person name="Aoki J."/>
            <person name="Kato H."/>
            <person name="Ishii J."/>
            <person name="Hino S."/>
            <person name="Arai H."/>
            <person name="Inoue K."/>
        </authorList>
    </citation>
    <scope>SUBUNIT</scope>
    <scope>CATALYTIC ACTIVITY</scope>
    <scope>FUNCTION</scope>
    <scope>ACTIVITY REGULATION</scope>
    <scope>INTERACTION WITH PAFAH1B1</scope>
</reference>
<reference key="4">
    <citation type="journal article" date="1997" name="Nature">
        <title>Brain acetylhydrolase that inactivates platelet-activating factor is a G-protein-like trimer.</title>
        <authorList>
            <person name="Ho Y.S."/>
            <person name="Swenson L."/>
            <person name="Derewenda U."/>
            <person name="Serre L."/>
            <person name="Wei Y."/>
            <person name="Dauter Z."/>
            <person name="Hattori M."/>
            <person name="Adachi T."/>
            <person name="Aoki J."/>
            <person name="Arai H."/>
            <person name="Inoue K."/>
            <person name="Derewenda Z.S."/>
        </authorList>
    </citation>
    <scope>X-RAY CRYSTALLOGRAPHY (1.7 ANGSTROMS)</scope>
    <scope>ACTIVE SITE</scope>
</reference>